<dbReference type="EMBL" id="AE016822">
    <property type="protein sequence ID" value="AAT89088.1"/>
    <property type="molecule type" value="Genomic_DNA"/>
</dbReference>
<dbReference type="RefSeq" id="WP_011186083.1">
    <property type="nucleotide sequence ID" value="NC_006087.1"/>
</dbReference>
<dbReference type="SMR" id="Q6AEV7"/>
<dbReference type="STRING" id="281090.Lxx12440"/>
<dbReference type="KEGG" id="lxx:Lxx12440"/>
<dbReference type="eggNOG" id="COG0052">
    <property type="taxonomic scope" value="Bacteria"/>
</dbReference>
<dbReference type="HOGENOM" id="CLU_040318_2_3_11"/>
<dbReference type="Proteomes" id="UP000001306">
    <property type="component" value="Chromosome"/>
</dbReference>
<dbReference type="GO" id="GO:0022627">
    <property type="term" value="C:cytosolic small ribosomal subunit"/>
    <property type="evidence" value="ECO:0007669"/>
    <property type="project" value="TreeGrafter"/>
</dbReference>
<dbReference type="GO" id="GO:0003735">
    <property type="term" value="F:structural constituent of ribosome"/>
    <property type="evidence" value="ECO:0007669"/>
    <property type="project" value="InterPro"/>
</dbReference>
<dbReference type="GO" id="GO:0006412">
    <property type="term" value="P:translation"/>
    <property type="evidence" value="ECO:0007669"/>
    <property type="project" value="UniProtKB-UniRule"/>
</dbReference>
<dbReference type="CDD" id="cd01425">
    <property type="entry name" value="RPS2"/>
    <property type="match status" value="1"/>
</dbReference>
<dbReference type="FunFam" id="1.10.287.610:FF:000001">
    <property type="entry name" value="30S ribosomal protein S2"/>
    <property type="match status" value="1"/>
</dbReference>
<dbReference type="Gene3D" id="3.40.50.10490">
    <property type="entry name" value="Glucose-6-phosphate isomerase like protein, domain 1"/>
    <property type="match status" value="1"/>
</dbReference>
<dbReference type="Gene3D" id="1.10.287.610">
    <property type="entry name" value="Helix hairpin bin"/>
    <property type="match status" value="1"/>
</dbReference>
<dbReference type="HAMAP" id="MF_00291_B">
    <property type="entry name" value="Ribosomal_uS2_B"/>
    <property type="match status" value="1"/>
</dbReference>
<dbReference type="InterPro" id="IPR001865">
    <property type="entry name" value="Ribosomal_uS2"/>
</dbReference>
<dbReference type="InterPro" id="IPR005706">
    <property type="entry name" value="Ribosomal_uS2_bac/mit/plastid"/>
</dbReference>
<dbReference type="InterPro" id="IPR018130">
    <property type="entry name" value="Ribosomal_uS2_CS"/>
</dbReference>
<dbReference type="InterPro" id="IPR023591">
    <property type="entry name" value="Ribosomal_uS2_flav_dom_sf"/>
</dbReference>
<dbReference type="NCBIfam" id="TIGR01011">
    <property type="entry name" value="rpsB_bact"/>
    <property type="match status" value="1"/>
</dbReference>
<dbReference type="PANTHER" id="PTHR12534">
    <property type="entry name" value="30S RIBOSOMAL PROTEIN S2 PROKARYOTIC AND ORGANELLAR"/>
    <property type="match status" value="1"/>
</dbReference>
<dbReference type="PANTHER" id="PTHR12534:SF0">
    <property type="entry name" value="SMALL RIBOSOMAL SUBUNIT PROTEIN US2M"/>
    <property type="match status" value="1"/>
</dbReference>
<dbReference type="Pfam" id="PF00318">
    <property type="entry name" value="Ribosomal_S2"/>
    <property type="match status" value="1"/>
</dbReference>
<dbReference type="PRINTS" id="PR00395">
    <property type="entry name" value="RIBOSOMALS2"/>
</dbReference>
<dbReference type="SUPFAM" id="SSF52313">
    <property type="entry name" value="Ribosomal protein S2"/>
    <property type="match status" value="1"/>
</dbReference>
<dbReference type="PROSITE" id="PS00962">
    <property type="entry name" value="RIBOSOMAL_S2_1"/>
    <property type="match status" value="1"/>
</dbReference>
<proteinExistence type="inferred from homology"/>
<accession>Q6AEV7</accession>
<evidence type="ECO:0000255" key="1">
    <source>
        <dbReference type="HAMAP-Rule" id="MF_00291"/>
    </source>
</evidence>
<evidence type="ECO:0000305" key="2"/>
<name>RS2_LEIXX</name>
<protein>
    <recommendedName>
        <fullName evidence="1">Small ribosomal subunit protein uS2</fullName>
    </recommendedName>
    <alternativeName>
        <fullName evidence="2">30S ribosomal protein S2</fullName>
    </alternativeName>
</protein>
<comment type="similarity">
    <text evidence="1">Belongs to the universal ribosomal protein uS2 family.</text>
</comment>
<gene>
    <name evidence="1" type="primary">rpsB</name>
    <name type="ordered locus">Lxx12440</name>
</gene>
<sequence>MAVVTMRQLLDSGVHFGHQTRRWNPKMKRFILTERSGSYIIDLQQSLTYIDKTYDFVRETVAHGGTILFVGTKKQAQQAIAEQATRVGQPYVNQRWLGGLLTNFQTVSKRLARMKELEELDFEGTTSGFTKKELLIKKRELDKLHKSLGGIRNLSKTPSALWVVDTKKEHLAIDEAKKLGIPVIAILDTNCDPDEVQYPIPGNDDAIRSVSLLTHIVADAAAEGLIQRHQKPEEGVEAAEPLAEWEQELLAQPAAEVQASAETEKAADADLAEAKADSAAVVAEGEAAADAVAETPAE</sequence>
<keyword id="KW-1185">Reference proteome</keyword>
<keyword id="KW-0687">Ribonucleoprotein</keyword>
<keyword id="KW-0689">Ribosomal protein</keyword>
<reference key="1">
    <citation type="journal article" date="2004" name="Mol. Plant Microbe Interact.">
        <title>The genome sequence of the Gram-positive sugarcane pathogen Leifsonia xyli subsp. xyli.</title>
        <authorList>
            <person name="Monteiro-Vitorello C.B."/>
            <person name="Camargo L.E.A."/>
            <person name="Van Sluys M.A."/>
            <person name="Kitajima J.P."/>
            <person name="Truffi D."/>
            <person name="do Amaral A.M."/>
            <person name="Harakava R."/>
            <person name="de Oliveira J.C.F."/>
            <person name="Wood D."/>
            <person name="de Oliveira M.C."/>
            <person name="Miyaki C.Y."/>
            <person name="Takita M.A."/>
            <person name="da Silva A.C.R."/>
            <person name="Furlan L.R."/>
            <person name="Carraro D.M."/>
            <person name="Camarotte G."/>
            <person name="Almeida N.F. Jr."/>
            <person name="Carrer H."/>
            <person name="Coutinho L.L."/>
            <person name="El-Dorry H.A."/>
            <person name="Ferro M.I.T."/>
            <person name="Gagliardi P.R."/>
            <person name="Giglioti E."/>
            <person name="Goldman M.H.S."/>
            <person name="Goldman G.H."/>
            <person name="Kimura E.T."/>
            <person name="Ferro E.S."/>
            <person name="Kuramae E.E."/>
            <person name="Lemos E.G.M."/>
            <person name="Lemos M.V.F."/>
            <person name="Mauro S.M.Z."/>
            <person name="Machado M.A."/>
            <person name="Marino C.L."/>
            <person name="Menck C.F."/>
            <person name="Nunes L.R."/>
            <person name="Oliveira R.C."/>
            <person name="Pereira G.G."/>
            <person name="Siqueira W."/>
            <person name="de Souza A.A."/>
            <person name="Tsai S.M."/>
            <person name="Zanca A.S."/>
            <person name="Simpson A.J.G."/>
            <person name="Brumbley S.M."/>
            <person name="Setubal J.C."/>
        </authorList>
    </citation>
    <scope>NUCLEOTIDE SEQUENCE [LARGE SCALE GENOMIC DNA]</scope>
    <source>
        <strain>CTCB07</strain>
    </source>
</reference>
<organism>
    <name type="scientific">Leifsonia xyli subsp. xyli (strain CTCB07)</name>
    <dbReference type="NCBI Taxonomy" id="281090"/>
    <lineage>
        <taxon>Bacteria</taxon>
        <taxon>Bacillati</taxon>
        <taxon>Actinomycetota</taxon>
        <taxon>Actinomycetes</taxon>
        <taxon>Micrococcales</taxon>
        <taxon>Microbacteriaceae</taxon>
        <taxon>Leifsonia</taxon>
    </lineage>
</organism>
<feature type="chain" id="PRO_0000134187" description="Small ribosomal subunit protein uS2">
    <location>
        <begin position="1"/>
        <end position="298"/>
    </location>
</feature>